<comment type="function">
    <text evidence="1">Catalyzes the synthesis of activated sulfate.</text>
</comment>
<comment type="catalytic activity">
    <reaction>
        <text>adenosine 5'-phosphosulfate + ATP = 3'-phosphoadenylyl sulfate + ADP + H(+)</text>
        <dbReference type="Rhea" id="RHEA:24152"/>
        <dbReference type="ChEBI" id="CHEBI:15378"/>
        <dbReference type="ChEBI" id="CHEBI:30616"/>
        <dbReference type="ChEBI" id="CHEBI:58243"/>
        <dbReference type="ChEBI" id="CHEBI:58339"/>
        <dbReference type="ChEBI" id="CHEBI:456216"/>
        <dbReference type="EC" id="2.7.1.25"/>
    </reaction>
</comment>
<comment type="pathway">
    <text>Sulfur metabolism; hydrogen sulfide biosynthesis; sulfite from sulfate: step 2/3.</text>
</comment>
<comment type="similarity">
    <text evidence="3">Belongs to the APS kinase family.</text>
</comment>
<dbReference type="EC" id="2.7.1.25"/>
<dbReference type="EMBL" id="AE013218">
    <property type="protein sequence ID" value="AAM67957.1"/>
    <property type="molecule type" value="Genomic_DNA"/>
</dbReference>
<dbReference type="RefSeq" id="WP_011053924.1">
    <property type="nucleotide sequence ID" value="NC_004061.1"/>
</dbReference>
<dbReference type="SMR" id="Q8K9D4"/>
<dbReference type="STRING" id="198804.BUsg_407"/>
<dbReference type="GeneID" id="93003880"/>
<dbReference type="KEGG" id="bas:BUsg_407"/>
<dbReference type="eggNOG" id="COG0529">
    <property type="taxonomic scope" value="Bacteria"/>
</dbReference>
<dbReference type="HOGENOM" id="CLU_046932_1_0_6"/>
<dbReference type="UniPathway" id="UPA00140">
    <property type="reaction ID" value="UER00205"/>
</dbReference>
<dbReference type="Proteomes" id="UP000000416">
    <property type="component" value="Chromosome"/>
</dbReference>
<dbReference type="GO" id="GO:0004020">
    <property type="term" value="F:adenylylsulfate kinase activity"/>
    <property type="evidence" value="ECO:0007669"/>
    <property type="project" value="UniProtKB-UniRule"/>
</dbReference>
<dbReference type="GO" id="GO:0005524">
    <property type="term" value="F:ATP binding"/>
    <property type="evidence" value="ECO:0007669"/>
    <property type="project" value="UniProtKB-UniRule"/>
</dbReference>
<dbReference type="GO" id="GO:0070814">
    <property type="term" value="P:hydrogen sulfide biosynthetic process"/>
    <property type="evidence" value="ECO:0007669"/>
    <property type="project" value="UniProtKB-UniRule"/>
</dbReference>
<dbReference type="GO" id="GO:0000103">
    <property type="term" value="P:sulfate assimilation"/>
    <property type="evidence" value="ECO:0007669"/>
    <property type="project" value="UniProtKB-UniRule"/>
</dbReference>
<dbReference type="CDD" id="cd02027">
    <property type="entry name" value="APSK"/>
    <property type="match status" value="1"/>
</dbReference>
<dbReference type="Gene3D" id="3.40.50.300">
    <property type="entry name" value="P-loop containing nucleotide triphosphate hydrolases"/>
    <property type="match status" value="1"/>
</dbReference>
<dbReference type="HAMAP" id="MF_00065">
    <property type="entry name" value="Adenylyl_sulf_kinase"/>
    <property type="match status" value="1"/>
</dbReference>
<dbReference type="InterPro" id="IPR002891">
    <property type="entry name" value="APS_kinase"/>
</dbReference>
<dbReference type="InterPro" id="IPR027417">
    <property type="entry name" value="P-loop_NTPase"/>
</dbReference>
<dbReference type="NCBIfam" id="TIGR00455">
    <property type="entry name" value="apsK"/>
    <property type="match status" value="1"/>
</dbReference>
<dbReference type="NCBIfam" id="NF003013">
    <property type="entry name" value="PRK03846.1"/>
    <property type="match status" value="1"/>
</dbReference>
<dbReference type="PANTHER" id="PTHR11055:SF63">
    <property type="entry name" value="ADENYLYL-SULFATE KINASE 1, CHLOROPLASTIC"/>
    <property type="match status" value="1"/>
</dbReference>
<dbReference type="PANTHER" id="PTHR11055">
    <property type="entry name" value="BIFUNCTIONAL 3'-PHOSPHOADENOSINE 5'-PHOSPHOSULFATE SYNTHASE"/>
    <property type="match status" value="1"/>
</dbReference>
<dbReference type="Pfam" id="PF01583">
    <property type="entry name" value="APS_kinase"/>
    <property type="match status" value="1"/>
</dbReference>
<dbReference type="SUPFAM" id="SSF52540">
    <property type="entry name" value="P-loop containing nucleoside triphosphate hydrolases"/>
    <property type="match status" value="1"/>
</dbReference>
<accession>Q8K9D4</accession>
<gene>
    <name type="primary">cysC</name>
    <name type="ordered locus">BUsg_407</name>
</gene>
<evidence type="ECO:0000250" key="1"/>
<evidence type="ECO:0000255" key="2"/>
<evidence type="ECO:0000305" key="3"/>
<reference key="1">
    <citation type="journal article" date="2002" name="Science">
        <title>50 million years of genomic stasis in endosymbiotic bacteria.</title>
        <authorList>
            <person name="Tamas I."/>
            <person name="Klasson L."/>
            <person name="Canbaeck B."/>
            <person name="Naeslund A.K."/>
            <person name="Eriksson A.-S."/>
            <person name="Wernegreen J.J."/>
            <person name="Sandstroem J.P."/>
            <person name="Moran N.A."/>
            <person name="Andersson S.G.E."/>
        </authorList>
    </citation>
    <scope>NUCLEOTIDE SEQUENCE [LARGE SCALE GENOMIC DNA]</scope>
    <source>
        <strain>Sg</strain>
    </source>
</reference>
<feature type="chain" id="PRO_0000105906" description="Adenylyl-sulfate kinase">
    <location>
        <begin position="1"/>
        <end position="211"/>
    </location>
</feature>
<feature type="active site" description="Phosphoserine intermediate" evidence="1">
    <location>
        <position position="110"/>
    </location>
</feature>
<feature type="binding site" evidence="2">
    <location>
        <begin position="36"/>
        <end position="43"/>
    </location>
    <ligand>
        <name>ATP</name>
        <dbReference type="ChEBI" id="CHEBI:30616"/>
    </ligand>
</feature>
<sequence>MHNNSKKNIIWQKHSVTRIKREQKNGHKSIVIWFTGLSGSGKSSIANSLEEILFQNNFNTYLLDGDNIRSSLCSDLSFSILDRNENIRRIGEVSKLMIDAGIIVLVSVISPYRNQRKKIRLMLGKINFLEVFVDTPLNICEERDPKKLYQKSRLGKISDLTGIQSLYEIPEKPDLHLDETISLKNNTKKLIHILCDKNIISFPNIDETFLF</sequence>
<proteinExistence type="inferred from homology"/>
<name>CYSC_BUCAP</name>
<keyword id="KW-0067">ATP-binding</keyword>
<keyword id="KW-0418">Kinase</keyword>
<keyword id="KW-0547">Nucleotide-binding</keyword>
<keyword id="KW-0597">Phosphoprotein</keyword>
<keyword id="KW-0808">Transferase</keyword>
<organism>
    <name type="scientific">Buchnera aphidicola subsp. Schizaphis graminum (strain Sg)</name>
    <dbReference type="NCBI Taxonomy" id="198804"/>
    <lineage>
        <taxon>Bacteria</taxon>
        <taxon>Pseudomonadati</taxon>
        <taxon>Pseudomonadota</taxon>
        <taxon>Gammaproteobacteria</taxon>
        <taxon>Enterobacterales</taxon>
        <taxon>Erwiniaceae</taxon>
        <taxon>Buchnera</taxon>
    </lineage>
</organism>
<protein>
    <recommendedName>
        <fullName>Adenylyl-sulfate kinase</fullName>
        <ecNumber>2.7.1.25</ecNumber>
    </recommendedName>
    <alternativeName>
        <fullName>APS kinase</fullName>
    </alternativeName>
    <alternativeName>
        <fullName>ATP adenosine-5'-phosphosulfate 3'-phosphotransferase</fullName>
    </alternativeName>
    <alternativeName>
        <fullName>Adenosine-5'-phosphosulfate kinase</fullName>
    </alternativeName>
</protein>